<sequence>MGIFSIANQHIRFAVKLACAIVLALFIGFHFQLETPRWAVLTAAIVAAGPAFAAGGEPYSGAIRYRGMLRIIGTFIGCIAALIIIISMIRAPLLMILVCCVWAGFCTWISSLVRIENSYAWGLSGYTALIIVITIQTEPLLTPQFALERCSEIVIGIGCAILADLLFSPRSIKQEVDRELDSLLVAQYQLMQLCIKHGDSEEVDNAWGDLVRRTAALEGMRSNLNMESSRWVRANRRLKALNTLSLTLITQSCETYLIQNTRPELITDTFRELFETPVETVQDVHRQLKRMRRVIVWTGERETPVTLYSWVGAATRYLLLKRGVISNTKISATEEEILQGEPVVKVESAERHHAMVNFWRTTLSCILGTLFWLWTGWTSGNGAMVMIAVVTSLAMRLPNPRMVCIDFIYGTLAALPLGLLYFLVIIPNTQQSMLLLCLSLAVLGFFIGIEVQKRRLGSMGALASTINIIVLDNPMTFHFSQFLDSALGQIVGCMLAFIVILLVRDKSKDRTGRVLLNQFVSAAVSAMTTNVVRRKENRLPALYQQLFLLMNKFPGDLPKFRLALTMIIAHQRLRDAPIPVNEDLSVFHRQLRRTADHVISAGSDDKRRRYFGQLLDELDIYQEKLRIWEAPPQVTEPVKRLTGMLHKYQNALTDS</sequence>
<protein>
    <recommendedName>
        <fullName evidence="1">p-hydroxybenzoic acid efflux pump subunit AaeB</fullName>
        <shortName evidence="1">pHBA efflux pump protein B</shortName>
    </recommendedName>
</protein>
<proteinExistence type="inferred from homology"/>
<reference key="1">
    <citation type="journal article" date="2009" name="PLoS ONE">
        <title>Salmonella paratyphi C: genetic divergence from Salmonella choleraesuis and pathogenic convergence with Salmonella typhi.</title>
        <authorList>
            <person name="Liu W.-Q."/>
            <person name="Feng Y."/>
            <person name="Wang Y."/>
            <person name="Zou Q.-H."/>
            <person name="Chen F."/>
            <person name="Guo J.-T."/>
            <person name="Peng Y.-H."/>
            <person name="Jin Y."/>
            <person name="Li Y.-G."/>
            <person name="Hu S.-N."/>
            <person name="Johnston R.N."/>
            <person name="Liu G.-R."/>
            <person name="Liu S.-L."/>
        </authorList>
    </citation>
    <scope>NUCLEOTIDE SEQUENCE [LARGE SCALE GENOMIC DNA]</scope>
    <source>
        <strain>RKS4594</strain>
    </source>
</reference>
<keyword id="KW-0997">Cell inner membrane</keyword>
<keyword id="KW-1003">Cell membrane</keyword>
<keyword id="KW-0472">Membrane</keyword>
<keyword id="KW-0812">Transmembrane</keyword>
<keyword id="KW-1133">Transmembrane helix</keyword>
<keyword id="KW-0813">Transport</keyword>
<accession>C0PZQ9</accession>
<comment type="function">
    <text evidence="1">Forms an efflux pump with AaeA. Could function as a metabolic relief valve, allowing to eliminate certain compounds when they accumulate to high levels in the cell.</text>
</comment>
<comment type="subcellular location">
    <subcellularLocation>
        <location evidence="1">Cell inner membrane</location>
        <topology evidence="1">Multi-pass membrane protein</topology>
    </subcellularLocation>
</comment>
<comment type="similarity">
    <text evidence="1">Belongs to the aromatic acid exporter ArAE (TC 2.A.85) family.</text>
</comment>
<dbReference type="EMBL" id="CP000857">
    <property type="protein sequence ID" value="ACN47519.1"/>
    <property type="molecule type" value="Genomic_DNA"/>
</dbReference>
<dbReference type="RefSeq" id="WP_000510913.1">
    <property type="nucleotide sequence ID" value="NC_012125.1"/>
</dbReference>
<dbReference type="SMR" id="C0PZQ9"/>
<dbReference type="KEGG" id="sei:SPC_3434"/>
<dbReference type="HOGENOM" id="CLU_027647_0_0_6"/>
<dbReference type="Proteomes" id="UP000001599">
    <property type="component" value="Chromosome"/>
</dbReference>
<dbReference type="GO" id="GO:0005886">
    <property type="term" value="C:plasma membrane"/>
    <property type="evidence" value="ECO:0007669"/>
    <property type="project" value="UniProtKB-SubCell"/>
</dbReference>
<dbReference type="GO" id="GO:0022857">
    <property type="term" value="F:transmembrane transporter activity"/>
    <property type="evidence" value="ECO:0007669"/>
    <property type="project" value="UniProtKB-UniRule"/>
</dbReference>
<dbReference type="GO" id="GO:0046942">
    <property type="term" value="P:carboxylic acid transport"/>
    <property type="evidence" value="ECO:0007669"/>
    <property type="project" value="InterPro"/>
</dbReference>
<dbReference type="HAMAP" id="MF_01545">
    <property type="entry name" value="AaeB"/>
    <property type="match status" value="1"/>
</dbReference>
<dbReference type="InterPro" id="IPR006726">
    <property type="entry name" value="PHBA_efflux_AaeB/fusaric-R"/>
</dbReference>
<dbReference type="InterPro" id="IPR023706">
    <property type="entry name" value="PHBA_efflux_pump_AaeB"/>
</dbReference>
<dbReference type="NCBIfam" id="NF007916">
    <property type="entry name" value="PRK10631.1"/>
    <property type="match status" value="1"/>
</dbReference>
<dbReference type="PANTHER" id="PTHR30509:SF9">
    <property type="entry name" value="MULTIDRUG RESISTANCE PROTEIN MDTO"/>
    <property type="match status" value="1"/>
</dbReference>
<dbReference type="PANTHER" id="PTHR30509">
    <property type="entry name" value="P-HYDROXYBENZOIC ACID EFFLUX PUMP SUBUNIT-RELATED"/>
    <property type="match status" value="1"/>
</dbReference>
<dbReference type="Pfam" id="PF04632">
    <property type="entry name" value="FUSC"/>
    <property type="match status" value="1"/>
</dbReference>
<feature type="chain" id="PRO_1000185282" description="p-hydroxybenzoic acid efflux pump subunit AaeB">
    <location>
        <begin position="1"/>
        <end position="655"/>
    </location>
</feature>
<feature type="transmembrane region" description="Helical" evidence="1">
    <location>
        <begin position="13"/>
        <end position="33"/>
    </location>
</feature>
<feature type="transmembrane region" description="Helical" evidence="1">
    <location>
        <begin position="38"/>
        <end position="58"/>
    </location>
</feature>
<feature type="transmembrane region" description="Helical" evidence="1">
    <location>
        <begin position="69"/>
        <end position="89"/>
    </location>
</feature>
<feature type="transmembrane region" description="Helical" evidence="1">
    <location>
        <begin position="93"/>
        <end position="113"/>
    </location>
</feature>
<feature type="transmembrane region" description="Helical" evidence="1">
    <location>
        <begin position="121"/>
        <end position="141"/>
    </location>
</feature>
<feature type="transmembrane region" description="Helical" evidence="1">
    <location>
        <begin position="152"/>
        <end position="172"/>
    </location>
</feature>
<feature type="transmembrane region" description="Helical" evidence="1">
    <location>
        <begin position="370"/>
        <end position="390"/>
    </location>
</feature>
<feature type="transmembrane region" description="Helical" evidence="1">
    <location>
        <begin position="407"/>
        <end position="427"/>
    </location>
</feature>
<feature type="transmembrane region" description="Helical" evidence="1">
    <location>
        <begin position="431"/>
        <end position="451"/>
    </location>
</feature>
<feature type="transmembrane region" description="Helical" evidence="1">
    <location>
        <begin position="459"/>
        <end position="479"/>
    </location>
</feature>
<feature type="transmembrane region" description="Helical" evidence="1">
    <location>
        <begin position="482"/>
        <end position="502"/>
    </location>
</feature>
<gene>
    <name evidence="1" type="primary">aaeB</name>
    <name type="ordered locus">SPC_3434</name>
</gene>
<name>AAEB_SALPC</name>
<organism>
    <name type="scientific">Salmonella paratyphi C (strain RKS4594)</name>
    <dbReference type="NCBI Taxonomy" id="476213"/>
    <lineage>
        <taxon>Bacteria</taxon>
        <taxon>Pseudomonadati</taxon>
        <taxon>Pseudomonadota</taxon>
        <taxon>Gammaproteobacteria</taxon>
        <taxon>Enterobacterales</taxon>
        <taxon>Enterobacteriaceae</taxon>
        <taxon>Salmonella</taxon>
    </lineage>
</organism>
<evidence type="ECO:0000255" key="1">
    <source>
        <dbReference type="HAMAP-Rule" id="MF_01545"/>
    </source>
</evidence>